<evidence type="ECO:0000250" key="1"/>
<evidence type="ECO:0000255" key="2">
    <source>
        <dbReference type="HAMAP-Rule" id="MF_00100"/>
    </source>
</evidence>
<evidence type="ECO:0000256" key="3">
    <source>
        <dbReference type="SAM" id="MobiDB-lite"/>
    </source>
</evidence>
<accession>Q04ZJ5</accession>
<organism>
    <name type="scientific">Leptospira borgpetersenii serovar Hardjo-bovis (strain L550)</name>
    <dbReference type="NCBI Taxonomy" id="355276"/>
    <lineage>
        <taxon>Bacteria</taxon>
        <taxon>Pseudomonadati</taxon>
        <taxon>Spirochaetota</taxon>
        <taxon>Spirochaetia</taxon>
        <taxon>Leptospirales</taxon>
        <taxon>Leptospiraceae</taxon>
        <taxon>Leptospira</taxon>
    </lineage>
</organism>
<feature type="chain" id="PRO_0000335486" description="Translation initiation factor IF-2">
    <location>
        <begin position="1"/>
        <end position="864"/>
    </location>
</feature>
<feature type="domain" description="tr-type G">
    <location>
        <begin position="359"/>
        <end position="528"/>
    </location>
</feature>
<feature type="region of interest" description="Disordered" evidence="3">
    <location>
        <begin position="1"/>
        <end position="252"/>
    </location>
</feature>
<feature type="region of interest" description="G1" evidence="1">
    <location>
        <begin position="368"/>
        <end position="375"/>
    </location>
</feature>
<feature type="region of interest" description="G2" evidence="1">
    <location>
        <begin position="393"/>
        <end position="397"/>
    </location>
</feature>
<feature type="region of interest" description="G3" evidence="1">
    <location>
        <begin position="414"/>
        <end position="417"/>
    </location>
</feature>
<feature type="region of interest" description="G4" evidence="1">
    <location>
        <begin position="468"/>
        <end position="471"/>
    </location>
</feature>
<feature type="region of interest" description="G5" evidence="1">
    <location>
        <begin position="504"/>
        <end position="506"/>
    </location>
</feature>
<feature type="compositionally biased region" description="Basic and acidic residues" evidence="3">
    <location>
        <begin position="78"/>
        <end position="90"/>
    </location>
</feature>
<feature type="compositionally biased region" description="Polar residues" evidence="3">
    <location>
        <begin position="106"/>
        <end position="120"/>
    </location>
</feature>
<feature type="compositionally biased region" description="Gly residues" evidence="3">
    <location>
        <begin position="150"/>
        <end position="212"/>
    </location>
</feature>
<feature type="compositionally biased region" description="Basic and acidic residues" evidence="3">
    <location>
        <begin position="239"/>
        <end position="252"/>
    </location>
</feature>
<feature type="binding site" evidence="2">
    <location>
        <begin position="368"/>
        <end position="375"/>
    </location>
    <ligand>
        <name>GTP</name>
        <dbReference type="ChEBI" id="CHEBI:37565"/>
    </ligand>
</feature>
<feature type="binding site" evidence="2">
    <location>
        <begin position="414"/>
        <end position="418"/>
    </location>
    <ligand>
        <name>GTP</name>
        <dbReference type="ChEBI" id="CHEBI:37565"/>
    </ligand>
</feature>
<feature type="binding site" evidence="2">
    <location>
        <begin position="468"/>
        <end position="471"/>
    </location>
    <ligand>
        <name>GTP</name>
        <dbReference type="ChEBI" id="CHEBI:37565"/>
    </ligand>
</feature>
<comment type="function">
    <text evidence="2">One of the essential components for the initiation of protein synthesis. Protects formylmethionyl-tRNA from spontaneous hydrolysis and promotes its binding to the 30S ribosomal subunits. Also involved in the hydrolysis of GTP during the formation of the 70S ribosomal complex.</text>
</comment>
<comment type="subcellular location">
    <subcellularLocation>
        <location evidence="2">Cytoplasm</location>
    </subcellularLocation>
</comment>
<comment type="similarity">
    <text evidence="2">Belongs to the TRAFAC class translation factor GTPase superfamily. Classic translation factor GTPase family. IF-2 subfamily.</text>
</comment>
<sequence length="864" mass="92440">MEDKNKTIKETLQGAADAGKRKKLIIKKKGDENSAPSSASPKKETIAESAPVKPLTPLPSRGDSGQSPIVRPAPSASKEVKYEESSRKQDSGQSGSRPLRDKDSQVRPSGDSSYPVSRSPFQKEDSNIIVSRPTQRPVRPNPGGSYQGNRGPGQGGGYQGNRGPGQGGGYQGNRGPGQGGGYQGNRGPGQQTGPGNRFGGSGPGNRSGGPGGRPMPITSAEVELSQARGSTGASKKKGHDKEKTSSDKRDFSGAENTKFFKQRFKKTKVVGVSGVSVPKEITVLENVQVGELAKKMNLKPGDVIGKLMKMGMMVTINNIIDAETAALLADEYGCKVKVVSLYEETIIEEEKDNEGDYINRPPVVTIMGHVDHGKTKLLDTIRRSSVIDTESGGITQHIGAYQVKTARGLITFLDTPGHEAFTSMRARGAKVTDIVILVVAADDGVMPQTLEAISHAKAAEVPIIVAINKIDLPTANPDKIMQELANHGLQSEEWGGQTMYVKISARENIGIDKLLEVILLQAEVMDLKANPKRRAKGTIIEAKLDPGRGSVATVLIQNGTLRVGDPFVAGVFSGRVRAMYNDLGQLIEEAGPAFPAQVTGIDGVPDAGAPFDAMADEKEARNISQHRIEFEKIGNAGAAAGTTSKVTLENMNEYIKLGALKELKVIIKADVRGSAEAIKESLEKLSTPEVKLNVIQSGAGAIVDMDVMLASASNALIIGFHVRANPKTIALAEKEQVQIKYYNIIYQVVDEIKLAMEGLLEPEKIEEVIGTAEIREIFKVSKIGNIAGCMVTSGKIQKSANVRVISDGVTKFDGKLKSLKRVKDDVNDVVSGFECGIQVDGYNDFKVGDTIEAYNVTVIKRKLE</sequence>
<dbReference type="EMBL" id="CP000348">
    <property type="protein sequence ID" value="ABJ79500.1"/>
    <property type="molecule type" value="Genomic_DNA"/>
</dbReference>
<dbReference type="RefSeq" id="WP_011670553.1">
    <property type="nucleotide sequence ID" value="NC_008508.1"/>
</dbReference>
<dbReference type="SMR" id="Q04ZJ5"/>
<dbReference type="KEGG" id="lbl:LBL_2087"/>
<dbReference type="HOGENOM" id="CLU_006301_5_1_12"/>
<dbReference type="GO" id="GO:0005829">
    <property type="term" value="C:cytosol"/>
    <property type="evidence" value="ECO:0007669"/>
    <property type="project" value="TreeGrafter"/>
</dbReference>
<dbReference type="GO" id="GO:0005525">
    <property type="term" value="F:GTP binding"/>
    <property type="evidence" value="ECO:0007669"/>
    <property type="project" value="UniProtKB-KW"/>
</dbReference>
<dbReference type="GO" id="GO:0003924">
    <property type="term" value="F:GTPase activity"/>
    <property type="evidence" value="ECO:0007669"/>
    <property type="project" value="UniProtKB-UniRule"/>
</dbReference>
<dbReference type="GO" id="GO:0003743">
    <property type="term" value="F:translation initiation factor activity"/>
    <property type="evidence" value="ECO:0007669"/>
    <property type="project" value="UniProtKB-UniRule"/>
</dbReference>
<dbReference type="CDD" id="cd01887">
    <property type="entry name" value="IF2_eIF5B"/>
    <property type="match status" value="1"/>
</dbReference>
<dbReference type="CDD" id="cd03702">
    <property type="entry name" value="IF2_mtIF2_II"/>
    <property type="match status" value="1"/>
</dbReference>
<dbReference type="CDD" id="cd03692">
    <property type="entry name" value="mtIF2_IVc"/>
    <property type="match status" value="1"/>
</dbReference>
<dbReference type="FunFam" id="2.40.30.10:FF:000008">
    <property type="entry name" value="Translation initiation factor IF-2"/>
    <property type="match status" value="1"/>
</dbReference>
<dbReference type="FunFam" id="2.40.30.10:FF:000054">
    <property type="entry name" value="Translation initiation factor IF-2"/>
    <property type="match status" value="1"/>
</dbReference>
<dbReference type="FunFam" id="3.40.50.10050:FF:000001">
    <property type="entry name" value="Translation initiation factor IF-2"/>
    <property type="match status" value="1"/>
</dbReference>
<dbReference type="FunFam" id="3.40.50.300:FF:000019">
    <property type="entry name" value="Translation initiation factor IF-2"/>
    <property type="match status" value="1"/>
</dbReference>
<dbReference type="Gene3D" id="3.40.50.300">
    <property type="entry name" value="P-loop containing nucleotide triphosphate hydrolases"/>
    <property type="match status" value="1"/>
</dbReference>
<dbReference type="Gene3D" id="2.40.30.10">
    <property type="entry name" value="Translation factors"/>
    <property type="match status" value="2"/>
</dbReference>
<dbReference type="Gene3D" id="3.40.50.10050">
    <property type="entry name" value="Translation initiation factor IF- 2, domain 3"/>
    <property type="match status" value="1"/>
</dbReference>
<dbReference type="HAMAP" id="MF_00100_B">
    <property type="entry name" value="IF_2_B"/>
    <property type="match status" value="1"/>
</dbReference>
<dbReference type="InterPro" id="IPR053905">
    <property type="entry name" value="EF-G-like_DII"/>
</dbReference>
<dbReference type="InterPro" id="IPR004161">
    <property type="entry name" value="EFTu-like_2"/>
</dbReference>
<dbReference type="InterPro" id="IPR044145">
    <property type="entry name" value="IF2_II"/>
</dbReference>
<dbReference type="InterPro" id="IPR006847">
    <property type="entry name" value="IF2_N"/>
</dbReference>
<dbReference type="InterPro" id="IPR027417">
    <property type="entry name" value="P-loop_NTPase"/>
</dbReference>
<dbReference type="InterPro" id="IPR005225">
    <property type="entry name" value="Small_GTP-bd"/>
</dbReference>
<dbReference type="InterPro" id="IPR000795">
    <property type="entry name" value="T_Tr_GTP-bd_dom"/>
</dbReference>
<dbReference type="InterPro" id="IPR000178">
    <property type="entry name" value="TF_IF2_bacterial-like"/>
</dbReference>
<dbReference type="InterPro" id="IPR015760">
    <property type="entry name" value="TIF_IF2"/>
</dbReference>
<dbReference type="InterPro" id="IPR023115">
    <property type="entry name" value="TIF_IF2_dom3"/>
</dbReference>
<dbReference type="InterPro" id="IPR036925">
    <property type="entry name" value="TIF_IF2_dom3_sf"/>
</dbReference>
<dbReference type="InterPro" id="IPR009000">
    <property type="entry name" value="Transl_B-barrel_sf"/>
</dbReference>
<dbReference type="NCBIfam" id="TIGR00487">
    <property type="entry name" value="IF-2"/>
    <property type="match status" value="1"/>
</dbReference>
<dbReference type="NCBIfam" id="TIGR00231">
    <property type="entry name" value="small_GTP"/>
    <property type="match status" value="1"/>
</dbReference>
<dbReference type="PANTHER" id="PTHR43381:SF5">
    <property type="entry name" value="TR-TYPE G DOMAIN-CONTAINING PROTEIN"/>
    <property type="match status" value="1"/>
</dbReference>
<dbReference type="PANTHER" id="PTHR43381">
    <property type="entry name" value="TRANSLATION INITIATION FACTOR IF-2-RELATED"/>
    <property type="match status" value="1"/>
</dbReference>
<dbReference type="Pfam" id="PF22042">
    <property type="entry name" value="EF-G_D2"/>
    <property type="match status" value="1"/>
</dbReference>
<dbReference type="Pfam" id="PF00009">
    <property type="entry name" value="GTP_EFTU"/>
    <property type="match status" value="1"/>
</dbReference>
<dbReference type="Pfam" id="PF03144">
    <property type="entry name" value="GTP_EFTU_D2"/>
    <property type="match status" value="1"/>
</dbReference>
<dbReference type="Pfam" id="PF11987">
    <property type="entry name" value="IF-2"/>
    <property type="match status" value="1"/>
</dbReference>
<dbReference type="Pfam" id="PF04760">
    <property type="entry name" value="IF2_N"/>
    <property type="match status" value="1"/>
</dbReference>
<dbReference type="SUPFAM" id="SSF52156">
    <property type="entry name" value="Initiation factor IF2/eIF5b, domain 3"/>
    <property type="match status" value="1"/>
</dbReference>
<dbReference type="SUPFAM" id="SSF52540">
    <property type="entry name" value="P-loop containing nucleoside triphosphate hydrolases"/>
    <property type="match status" value="1"/>
</dbReference>
<dbReference type="SUPFAM" id="SSF50447">
    <property type="entry name" value="Translation proteins"/>
    <property type="match status" value="2"/>
</dbReference>
<dbReference type="PROSITE" id="PS51722">
    <property type="entry name" value="G_TR_2"/>
    <property type="match status" value="1"/>
</dbReference>
<dbReference type="PROSITE" id="PS01176">
    <property type="entry name" value="IF2"/>
    <property type="match status" value="1"/>
</dbReference>
<name>IF2_LEPBL</name>
<keyword id="KW-0963">Cytoplasm</keyword>
<keyword id="KW-0342">GTP-binding</keyword>
<keyword id="KW-0396">Initiation factor</keyword>
<keyword id="KW-0547">Nucleotide-binding</keyword>
<keyword id="KW-0648">Protein biosynthesis</keyword>
<gene>
    <name evidence="2" type="primary">infB</name>
    <name type="ordered locus">LBL_2087</name>
</gene>
<protein>
    <recommendedName>
        <fullName evidence="2">Translation initiation factor IF-2</fullName>
    </recommendedName>
</protein>
<reference key="1">
    <citation type="journal article" date="2006" name="Proc. Natl. Acad. Sci. U.S.A.">
        <title>Genome reduction in Leptospira borgpetersenii reflects limited transmission potential.</title>
        <authorList>
            <person name="Bulach D.M."/>
            <person name="Zuerner R.L."/>
            <person name="Wilson P."/>
            <person name="Seemann T."/>
            <person name="McGrath A."/>
            <person name="Cullen P.A."/>
            <person name="Davis J."/>
            <person name="Johnson M."/>
            <person name="Kuczek E."/>
            <person name="Alt D.P."/>
            <person name="Peterson-Burch B."/>
            <person name="Coppel R.L."/>
            <person name="Rood J.I."/>
            <person name="Davies J.K."/>
            <person name="Adler B."/>
        </authorList>
    </citation>
    <scope>NUCLEOTIDE SEQUENCE [LARGE SCALE GENOMIC DNA]</scope>
    <source>
        <strain>L550</strain>
    </source>
</reference>
<proteinExistence type="inferred from homology"/>